<keyword id="KW-0066">ATP synthesis</keyword>
<keyword id="KW-0997">Cell inner membrane</keyword>
<keyword id="KW-1003">Cell membrane</keyword>
<keyword id="KW-0139">CF(1)</keyword>
<keyword id="KW-0375">Hydrogen ion transport</keyword>
<keyword id="KW-0406">Ion transport</keyword>
<keyword id="KW-0472">Membrane</keyword>
<keyword id="KW-0813">Transport</keyword>
<name>ATPD_VIBAL</name>
<evidence type="ECO:0000255" key="1">
    <source>
        <dbReference type="HAMAP-Rule" id="MF_01416"/>
    </source>
</evidence>
<comment type="function">
    <text evidence="1">F(1)F(0) ATP synthase produces ATP from ADP in the presence of a proton or sodium gradient. F-type ATPases consist of two structural domains, F(1) containing the extramembraneous catalytic core and F(0) containing the membrane proton channel, linked together by a central stalk and a peripheral stalk. During catalysis, ATP synthesis in the catalytic domain of F(1) is coupled via a rotary mechanism of the central stalk subunits to proton translocation.</text>
</comment>
<comment type="function">
    <text evidence="1">This protein is part of the stalk that links CF(0) to CF(1). It either transmits conformational changes from CF(0) to CF(1) or is implicated in proton conduction.</text>
</comment>
<comment type="subunit">
    <text evidence="1">F-type ATPases have 2 components, F(1) - the catalytic core - and F(0) - the membrane proton channel. F(1) has five subunits: alpha(3), beta(3), gamma(1), delta(1), epsilon(1). F(0) has three main subunits: a(1), b(2) and c(10-14). The alpha and beta chains form an alternating ring which encloses part of the gamma chain. F(1) is attached to F(0) by a central stalk formed by the gamma and epsilon chains, while a peripheral stalk is formed by the delta and b chains.</text>
</comment>
<comment type="subcellular location">
    <subcellularLocation>
        <location evidence="1">Cell inner membrane</location>
        <topology evidence="1">Peripheral membrane protein</topology>
    </subcellularLocation>
</comment>
<comment type="similarity">
    <text evidence="1">Belongs to the ATPase delta chain family.</text>
</comment>
<protein>
    <recommendedName>
        <fullName evidence="1">ATP synthase subunit delta</fullName>
    </recommendedName>
    <alternativeName>
        <fullName evidence="1">ATP synthase F(1) sector subunit delta</fullName>
    </alternativeName>
    <alternativeName>
        <fullName evidence="1">F-type ATPase subunit delta</fullName>
        <shortName evidence="1">F-ATPase subunit delta</shortName>
    </alternativeName>
</protein>
<dbReference type="EMBL" id="X16050">
    <property type="protein sequence ID" value="CAA34178.1"/>
    <property type="molecule type" value="Genomic_DNA"/>
</dbReference>
<dbReference type="PIR" id="S06079">
    <property type="entry name" value="S06079"/>
</dbReference>
<dbReference type="SMR" id="P12987"/>
<dbReference type="STRING" id="663.BAU10_15095"/>
<dbReference type="eggNOG" id="COG0712">
    <property type="taxonomic scope" value="Bacteria"/>
</dbReference>
<dbReference type="GO" id="GO:0005886">
    <property type="term" value="C:plasma membrane"/>
    <property type="evidence" value="ECO:0007669"/>
    <property type="project" value="UniProtKB-SubCell"/>
</dbReference>
<dbReference type="GO" id="GO:0045259">
    <property type="term" value="C:proton-transporting ATP synthase complex"/>
    <property type="evidence" value="ECO:0007669"/>
    <property type="project" value="UniProtKB-KW"/>
</dbReference>
<dbReference type="GO" id="GO:0046933">
    <property type="term" value="F:proton-transporting ATP synthase activity, rotational mechanism"/>
    <property type="evidence" value="ECO:0007669"/>
    <property type="project" value="UniProtKB-UniRule"/>
</dbReference>
<dbReference type="Gene3D" id="1.10.520.20">
    <property type="entry name" value="N-terminal domain of the delta subunit of the F1F0-ATP synthase"/>
    <property type="match status" value="1"/>
</dbReference>
<dbReference type="HAMAP" id="MF_01416">
    <property type="entry name" value="ATP_synth_delta_bact"/>
    <property type="match status" value="1"/>
</dbReference>
<dbReference type="InterPro" id="IPR026015">
    <property type="entry name" value="ATP_synth_OSCP/delta_N_sf"/>
</dbReference>
<dbReference type="InterPro" id="IPR020781">
    <property type="entry name" value="ATPase_OSCP/d_CS"/>
</dbReference>
<dbReference type="InterPro" id="IPR000711">
    <property type="entry name" value="ATPase_OSCP/dsu"/>
</dbReference>
<dbReference type="NCBIfam" id="TIGR01145">
    <property type="entry name" value="ATP_synt_delta"/>
    <property type="match status" value="1"/>
</dbReference>
<dbReference type="NCBIfam" id="NF004402">
    <property type="entry name" value="PRK05758.2-2"/>
    <property type="match status" value="1"/>
</dbReference>
<dbReference type="NCBIfam" id="NF004404">
    <property type="entry name" value="PRK05758.2-5"/>
    <property type="match status" value="1"/>
</dbReference>
<dbReference type="PANTHER" id="PTHR11910">
    <property type="entry name" value="ATP SYNTHASE DELTA CHAIN"/>
    <property type="match status" value="1"/>
</dbReference>
<dbReference type="Pfam" id="PF00213">
    <property type="entry name" value="OSCP"/>
    <property type="match status" value="1"/>
</dbReference>
<dbReference type="PRINTS" id="PR00125">
    <property type="entry name" value="ATPASEDELTA"/>
</dbReference>
<dbReference type="SUPFAM" id="SSF47928">
    <property type="entry name" value="N-terminal domain of the delta subunit of the F1F0-ATP synthase"/>
    <property type="match status" value="1"/>
</dbReference>
<dbReference type="PROSITE" id="PS00389">
    <property type="entry name" value="ATPASE_DELTA"/>
    <property type="match status" value="1"/>
</dbReference>
<organism>
    <name type="scientific">Vibrio alginolyticus</name>
    <dbReference type="NCBI Taxonomy" id="663"/>
    <lineage>
        <taxon>Bacteria</taxon>
        <taxon>Pseudomonadati</taxon>
        <taxon>Pseudomonadota</taxon>
        <taxon>Gammaproteobacteria</taxon>
        <taxon>Vibrionales</taxon>
        <taxon>Vibrionaceae</taxon>
        <taxon>Vibrio</taxon>
    </lineage>
</organism>
<sequence length="177" mass="19489">MSDLTTIARPYAKAAFDFALEKDQLDQWGQMLSFAAEVAKNEQMNELLTGSVSADKMAEIFVAVCGEQVDTHGQNLLKVMAENGRLAALPDVCTEFYTLKKEHEKEIDVEVISATELSDEQLANIGSKLEKRLERKVKLNCSVDETLLGGVIIRAGDLVIDDSARGRLNRLSDALQS</sequence>
<proteinExistence type="inferred from homology"/>
<accession>P12987</accession>
<reference key="1">
    <citation type="journal article" date="1989" name="Nucleic Acids Res.">
        <title>Nucleotide sequence of the unc operon of Vibrio alginolyticus.</title>
        <authorList>
            <person name="Krumholz L.R."/>
            <person name="Esser U."/>
            <person name="Simoni R.D."/>
        </authorList>
    </citation>
    <scope>NUCLEOTIDE SEQUENCE [GENOMIC DNA]</scope>
    <source>
        <strain>138-2</strain>
    </source>
</reference>
<gene>
    <name evidence="1" type="primary">atpH</name>
    <name type="synonym">uncH</name>
</gene>
<feature type="chain" id="PRO_0000193497" description="ATP synthase subunit delta">
    <location>
        <begin position="1"/>
        <end position="177"/>
    </location>
</feature>